<sequence length="535" mass="60404">MVNIILLIVSALIGLILGYALISIRLKSAKEAAELTLLNAEQEAVDIRGKAEVDAEHIKKTAKRESKANRKELLLEAKEEARKYREEIEQEFKSERQELKQLETRLAERSLTLDRKDENLSSKEKVLDSKEQSLTDKSKHIDERQLQVEKLEEEKKAELEKVAAMTIAEAREVILMETENKLTHEIATRIRDAERDIKDRTVKTAKDLLAQAMQRLAGEYVTEQTITSVHLPDDNMKGRIIGREGRNIRTLESLTGIDVIIDDTPEVVILSGFDPIRREIARMTLESLIADGRIHPARIEELVEKNRLEMDNRIREYGEAAAYEIGAPNLHPDLIKIMGRLQFRTSFGQNVLRHSVEVGKLAGILAGELGENVALARRAGFLHDMGKAIDREVEGSHVEIGMEFARKYKEHPVVVNTIASHHGDVEPDSVIAVLVAAADALSSARPGARNESMENYIKRLRDLEEIATSFDGVQNSFALQAGREIRIMVQPEKISDDQVVILSHKVREKIEHNLDYPGNIKVTVIREMRAVDYAK</sequence>
<reference key="1">
    <citation type="journal article" date="2002" name="Proc. Natl. Acad. Sci. U.S.A.">
        <title>Genome sequence and comparative microarray analysis of serotype M18 group A Streptococcus strains associated with acute rheumatic fever outbreaks.</title>
        <authorList>
            <person name="Smoot J.C."/>
            <person name="Barbian K.D."/>
            <person name="Van Gompel J.J."/>
            <person name="Smoot L.M."/>
            <person name="Chaussee M.S."/>
            <person name="Sylva G.L."/>
            <person name="Sturdevant D.E."/>
            <person name="Ricklefs S.M."/>
            <person name="Porcella S.F."/>
            <person name="Parkins L.D."/>
            <person name="Beres S.B."/>
            <person name="Campbell D.S."/>
            <person name="Smith T.M."/>
            <person name="Zhang Q."/>
            <person name="Kapur V."/>
            <person name="Daly J.A."/>
            <person name="Veasy L.G."/>
            <person name="Musser J.M."/>
        </authorList>
    </citation>
    <scope>NUCLEOTIDE SEQUENCE [LARGE SCALE GENOMIC DNA]</scope>
    <source>
        <strain>MGAS8232</strain>
    </source>
</reference>
<keyword id="KW-1003">Cell membrane</keyword>
<keyword id="KW-0255">Endonuclease</keyword>
<keyword id="KW-0378">Hydrolase</keyword>
<keyword id="KW-0472">Membrane</keyword>
<keyword id="KW-0540">Nuclease</keyword>
<keyword id="KW-0694">RNA-binding</keyword>
<keyword id="KW-0812">Transmembrane</keyword>
<keyword id="KW-1133">Transmembrane helix</keyword>
<comment type="function">
    <text evidence="1">Endoribonuclease that initiates mRNA decay.</text>
</comment>
<comment type="subcellular location">
    <subcellularLocation>
        <location evidence="1">Cell membrane</location>
        <topology evidence="1">Single-pass membrane protein</topology>
    </subcellularLocation>
</comment>
<comment type="similarity">
    <text evidence="1">Belongs to the RNase Y family.</text>
</comment>
<protein>
    <recommendedName>
        <fullName evidence="1">Ribonuclease Y</fullName>
        <shortName evidence="1">RNase Y</shortName>
        <ecNumber evidence="1">3.1.-.-</ecNumber>
    </recommendedName>
</protein>
<evidence type="ECO:0000255" key="1">
    <source>
        <dbReference type="HAMAP-Rule" id="MF_00335"/>
    </source>
</evidence>
<evidence type="ECO:0000255" key="2">
    <source>
        <dbReference type="PROSITE-ProRule" id="PRU01175"/>
    </source>
</evidence>
<evidence type="ECO:0000256" key="3">
    <source>
        <dbReference type="SAM" id="MobiDB-lite"/>
    </source>
</evidence>
<dbReference type="EC" id="3.1.-.-" evidence="1"/>
<dbReference type="EMBL" id="AE009949">
    <property type="protein sequence ID" value="AAL98192.1"/>
    <property type="molecule type" value="Genomic_DNA"/>
</dbReference>
<dbReference type="RefSeq" id="WP_011018058.1">
    <property type="nucleotide sequence ID" value="NC_003485.1"/>
</dbReference>
<dbReference type="SMR" id="Q8P000"/>
<dbReference type="KEGG" id="spm:spyM18_1643"/>
<dbReference type="HOGENOM" id="CLU_028328_1_0_9"/>
<dbReference type="GO" id="GO:0005886">
    <property type="term" value="C:plasma membrane"/>
    <property type="evidence" value="ECO:0007669"/>
    <property type="project" value="UniProtKB-SubCell"/>
</dbReference>
<dbReference type="GO" id="GO:0003723">
    <property type="term" value="F:RNA binding"/>
    <property type="evidence" value="ECO:0007669"/>
    <property type="project" value="UniProtKB-UniRule"/>
</dbReference>
<dbReference type="GO" id="GO:0004521">
    <property type="term" value="F:RNA endonuclease activity"/>
    <property type="evidence" value="ECO:0007669"/>
    <property type="project" value="UniProtKB-UniRule"/>
</dbReference>
<dbReference type="GO" id="GO:0006402">
    <property type="term" value="P:mRNA catabolic process"/>
    <property type="evidence" value="ECO:0007669"/>
    <property type="project" value="UniProtKB-UniRule"/>
</dbReference>
<dbReference type="CDD" id="cd00077">
    <property type="entry name" value="HDc"/>
    <property type="match status" value="1"/>
</dbReference>
<dbReference type="CDD" id="cd22431">
    <property type="entry name" value="KH-I_RNaseY"/>
    <property type="match status" value="1"/>
</dbReference>
<dbReference type="FunFam" id="1.10.3210.10:FF:000003">
    <property type="entry name" value="Ribonuclease Y"/>
    <property type="match status" value="1"/>
</dbReference>
<dbReference type="Gene3D" id="1.10.3210.10">
    <property type="entry name" value="Hypothetical protein af1432"/>
    <property type="match status" value="1"/>
</dbReference>
<dbReference type="Gene3D" id="3.30.1370.10">
    <property type="entry name" value="K Homology domain, type 1"/>
    <property type="match status" value="1"/>
</dbReference>
<dbReference type="HAMAP" id="MF_00335">
    <property type="entry name" value="RNase_Y"/>
    <property type="match status" value="1"/>
</dbReference>
<dbReference type="InterPro" id="IPR003607">
    <property type="entry name" value="HD/PDEase_dom"/>
</dbReference>
<dbReference type="InterPro" id="IPR006674">
    <property type="entry name" value="HD_domain"/>
</dbReference>
<dbReference type="InterPro" id="IPR006675">
    <property type="entry name" value="HDIG_dom"/>
</dbReference>
<dbReference type="InterPro" id="IPR004087">
    <property type="entry name" value="KH_dom"/>
</dbReference>
<dbReference type="InterPro" id="IPR004088">
    <property type="entry name" value="KH_dom_type_1"/>
</dbReference>
<dbReference type="InterPro" id="IPR036612">
    <property type="entry name" value="KH_dom_type_1_sf"/>
</dbReference>
<dbReference type="InterPro" id="IPR017705">
    <property type="entry name" value="Ribonuclease_Y"/>
</dbReference>
<dbReference type="InterPro" id="IPR022711">
    <property type="entry name" value="RNase_Y_N"/>
</dbReference>
<dbReference type="NCBIfam" id="TIGR00277">
    <property type="entry name" value="HDIG"/>
    <property type="match status" value="1"/>
</dbReference>
<dbReference type="NCBIfam" id="NF000997">
    <property type="entry name" value="PRK00106.1"/>
    <property type="match status" value="1"/>
</dbReference>
<dbReference type="NCBIfam" id="TIGR03319">
    <property type="entry name" value="RNase_Y"/>
    <property type="match status" value="1"/>
</dbReference>
<dbReference type="PANTHER" id="PTHR12826">
    <property type="entry name" value="RIBONUCLEASE Y"/>
    <property type="match status" value="1"/>
</dbReference>
<dbReference type="PANTHER" id="PTHR12826:SF15">
    <property type="entry name" value="RIBONUCLEASE Y"/>
    <property type="match status" value="1"/>
</dbReference>
<dbReference type="Pfam" id="PF01966">
    <property type="entry name" value="HD"/>
    <property type="match status" value="1"/>
</dbReference>
<dbReference type="Pfam" id="PF00013">
    <property type="entry name" value="KH_1"/>
    <property type="match status" value="1"/>
</dbReference>
<dbReference type="Pfam" id="PF12072">
    <property type="entry name" value="RNase_Y_N"/>
    <property type="match status" value="1"/>
</dbReference>
<dbReference type="SMART" id="SM00471">
    <property type="entry name" value="HDc"/>
    <property type="match status" value="1"/>
</dbReference>
<dbReference type="SMART" id="SM00322">
    <property type="entry name" value="KH"/>
    <property type="match status" value="1"/>
</dbReference>
<dbReference type="SUPFAM" id="SSF54791">
    <property type="entry name" value="Eukaryotic type KH-domain (KH-domain type I)"/>
    <property type="match status" value="1"/>
</dbReference>
<dbReference type="SUPFAM" id="SSF109604">
    <property type="entry name" value="HD-domain/PDEase-like"/>
    <property type="match status" value="1"/>
</dbReference>
<dbReference type="PROSITE" id="PS51831">
    <property type="entry name" value="HD"/>
    <property type="match status" value="1"/>
</dbReference>
<dbReference type="PROSITE" id="PS50084">
    <property type="entry name" value="KH_TYPE_1"/>
    <property type="match status" value="1"/>
</dbReference>
<gene>
    <name evidence="1" type="primary">rny</name>
    <name type="ordered locus">spyM18_1643</name>
</gene>
<accession>Q8P000</accession>
<name>RNY_STRP8</name>
<proteinExistence type="inferred from homology"/>
<organism>
    <name type="scientific">Streptococcus pyogenes serotype M18 (strain MGAS8232)</name>
    <dbReference type="NCBI Taxonomy" id="186103"/>
    <lineage>
        <taxon>Bacteria</taxon>
        <taxon>Bacillati</taxon>
        <taxon>Bacillota</taxon>
        <taxon>Bacilli</taxon>
        <taxon>Lactobacillales</taxon>
        <taxon>Streptococcaceae</taxon>
        <taxon>Streptococcus</taxon>
    </lineage>
</organism>
<feature type="chain" id="PRO_0000163802" description="Ribonuclease Y">
    <location>
        <begin position="1"/>
        <end position="535"/>
    </location>
</feature>
<feature type="transmembrane region" description="Helical" evidence="1">
    <location>
        <begin position="4"/>
        <end position="24"/>
    </location>
</feature>
<feature type="domain" description="KH" evidence="1">
    <location>
        <begin position="225"/>
        <end position="285"/>
    </location>
</feature>
<feature type="domain" description="HD" evidence="2">
    <location>
        <begin position="351"/>
        <end position="444"/>
    </location>
</feature>
<feature type="region of interest" description="Disordered" evidence="3">
    <location>
        <begin position="118"/>
        <end position="141"/>
    </location>
</feature>